<organism>
    <name type="scientific">Photorhabdus laumondii subsp. laumondii (strain DSM 15139 / CIP 105565 / TT01)</name>
    <name type="common">Photorhabdus luminescens subsp. laumondii</name>
    <dbReference type="NCBI Taxonomy" id="243265"/>
    <lineage>
        <taxon>Bacteria</taxon>
        <taxon>Pseudomonadati</taxon>
        <taxon>Pseudomonadota</taxon>
        <taxon>Gammaproteobacteria</taxon>
        <taxon>Enterobacterales</taxon>
        <taxon>Morganellaceae</taxon>
        <taxon>Photorhabdus</taxon>
    </lineage>
</organism>
<proteinExistence type="inferred from homology"/>
<gene>
    <name evidence="1" type="primary">gcvP</name>
    <name type="ordered locus">plu3596</name>
</gene>
<sequence>MTQTLSQLENQGEFIRRHIGSSAEQQKEMLATVGASSLNDLTQKIVPRDIALPEPPDVGGGATEQQALAELKAIASQNKRYQSYIGMGYAPAVLPPVILRNLLENPGWYTAYTPYQPEVSQGRLESLLNFQQVTIDLTGLDIASASLLDEATAAAEAMAMAKRISKLKNADRFFVADDIHPQTLDVVRTRAETFGFDVIVDKAEKVLELDGVFGVLLQQVGTTGEVHDYADLIAQLKQRKIIVSVAADLMALLLLTAPGKQGADMVFGSAQRFGVPMGYGGPHAAFFASRDEFKRSMPGRIIGVSRDAAGNTALRMAMQTREQHIRREKANSNICTAQVLLANIAAMYAVYHGSKGLKRIAGRIHRLTDILAVGLQKAGFTLRYKTWFDTLTVEVADKAAVLARAEKAEINLRTDTYGAVGITLSEATRRDDVIKLFSVLTGTDDKLDVEALDKELMTESHSIPASMLRSDEILLHPNFNRYHSETDMMRYMHRLERRDLALNQAMIPLGSCTMKLNAAAEMLPISWPEFNELHPFCPPEQAQGYQQMISQLSHWLVQLTGYDVVCMQPNSGAQGEYAGLLAIRRYHESRGEGHRHICLIPSSAHGTNPASAHMAGMTVVVVSCDKEGNIDLVDLREKAEESGNELSCIMVTYPSTHGVYEETIRQVCEIIHQYGGQVYLDGANMNAQVGITAPGFIGADVSHLNLHKTFCIPHGGGGPGMGPIGVKAHLAPFLPGHSVVQMDGLTEQRAVSAAPFGSASILPISWMYIRMMGSQGLKQASQTAILNANYIAARLKNDYDVLYTGHNGYVAHECILDIRPLKEEFGISEMDIAKRLIDYGFHAPTMSFPVAGTLMVEPTESESKVEIDRFVDAMLAIRAEIGKVAKGEWSLEDNPLVNAPHVQAELVSDWSHSYSRETAVFPTLETKANKYWPAVKRLDDVYGDRNLHCSCAPVSDYQ</sequence>
<protein>
    <recommendedName>
        <fullName evidence="1">Glycine dehydrogenase (decarboxylating)</fullName>
        <ecNumber evidence="1">1.4.4.2</ecNumber>
    </recommendedName>
    <alternativeName>
        <fullName evidence="1">Glycine cleavage system P-protein</fullName>
    </alternativeName>
    <alternativeName>
        <fullName evidence="1">Glycine decarboxylase</fullName>
    </alternativeName>
    <alternativeName>
        <fullName evidence="1">Glycine dehydrogenase (aminomethyl-transferring)</fullName>
    </alternativeName>
</protein>
<evidence type="ECO:0000255" key="1">
    <source>
        <dbReference type="HAMAP-Rule" id="MF_00711"/>
    </source>
</evidence>
<keyword id="KW-0560">Oxidoreductase</keyword>
<keyword id="KW-0663">Pyridoxal phosphate</keyword>
<keyword id="KW-1185">Reference proteome</keyword>
<comment type="function">
    <text evidence="1">The glycine cleavage system catalyzes the degradation of glycine. The P protein binds the alpha-amino group of glycine through its pyridoxal phosphate cofactor; CO(2) is released and the remaining methylamine moiety is then transferred to the lipoamide cofactor of the H protein.</text>
</comment>
<comment type="catalytic activity">
    <reaction evidence="1">
        <text>N(6)-[(R)-lipoyl]-L-lysyl-[glycine-cleavage complex H protein] + glycine + H(+) = N(6)-[(R)-S(8)-aminomethyldihydrolipoyl]-L-lysyl-[glycine-cleavage complex H protein] + CO2</text>
        <dbReference type="Rhea" id="RHEA:24304"/>
        <dbReference type="Rhea" id="RHEA-COMP:10494"/>
        <dbReference type="Rhea" id="RHEA-COMP:10495"/>
        <dbReference type="ChEBI" id="CHEBI:15378"/>
        <dbReference type="ChEBI" id="CHEBI:16526"/>
        <dbReference type="ChEBI" id="CHEBI:57305"/>
        <dbReference type="ChEBI" id="CHEBI:83099"/>
        <dbReference type="ChEBI" id="CHEBI:83143"/>
        <dbReference type="EC" id="1.4.4.2"/>
    </reaction>
</comment>
<comment type="cofactor">
    <cofactor evidence="1">
        <name>pyridoxal 5'-phosphate</name>
        <dbReference type="ChEBI" id="CHEBI:597326"/>
    </cofactor>
</comment>
<comment type="subunit">
    <text evidence="1">The glycine cleavage system is composed of four proteins: P, T, L and H.</text>
</comment>
<comment type="similarity">
    <text evidence="1">Belongs to the GcvP family.</text>
</comment>
<dbReference type="EC" id="1.4.4.2" evidence="1"/>
<dbReference type="EMBL" id="BX571871">
    <property type="protein sequence ID" value="CAE15969.1"/>
    <property type="molecule type" value="Genomic_DNA"/>
</dbReference>
<dbReference type="RefSeq" id="WP_011147763.1">
    <property type="nucleotide sequence ID" value="NC_005126.1"/>
</dbReference>
<dbReference type="SMR" id="Q7N199"/>
<dbReference type="STRING" id="243265.plu3596"/>
<dbReference type="GeneID" id="48849842"/>
<dbReference type="KEGG" id="plu:plu3596"/>
<dbReference type="eggNOG" id="COG0403">
    <property type="taxonomic scope" value="Bacteria"/>
</dbReference>
<dbReference type="eggNOG" id="COG1003">
    <property type="taxonomic scope" value="Bacteria"/>
</dbReference>
<dbReference type="HOGENOM" id="CLU_004620_3_2_6"/>
<dbReference type="OrthoDB" id="9801272at2"/>
<dbReference type="Proteomes" id="UP000002514">
    <property type="component" value="Chromosome"/>
</dbReference>
<dbReference type="GO" id="GO:0005829">
    <property type="term" value="C:cytosol"/>
    <property type="evidence" value="ECO:0007669"/>
    <property type="project" value="TreeGrafter"/>
</dbReference>
<dbReference type="GO" id="GO:0005960">
    <property type="term" value="C:glycine cleavage complex"/>
    <property type="evidence" value="ECO:0007669"/>
    <property type="project" value="TreeGrafter"/>
</dbReference>
<dbReference type="GO" id="GO:0016594">
    <property type="term" value="F:glycine binding"/>
    <property type="evidence" value="ECO:0007669"/>
    <property type="project" value="TreeGrafter"/>
</dbReference>
<dbReference type="GO" id="GO:0004375">
    <property type="term" value="F:glycine dehydrogenase (decarboxylating) activity"/>
    <property type="evidence" value="ECO:0007669"/>
    <property type="project" value="UniProtKB-EC"/>
</dbReference>
<dbReference type="GO" id="GO:0030170">
    <property type="term" value="F:pyridoxal phosphate binding"/>
    <property type="evidence" value="ECO:0007669"/>
    <property type="project" value="TreeGrafter"/>
</dbReference>
<dbReference type="GO" id="GO:0019464">
    <property type="term" value="P:glycine decarboxylation via glycine cleavage system"/>
    <property type="evidence" value="ECO:0007669"/>
    <property type="project" value="UniProtKB-UniRule"/>
</dbReference>
<dbReference type="CDD" id="cd00613">
    <property type="entry name" value="GDC-P"/>
    <property type="match status" value="2"/>
</dbReference>
<dbReference type="FunFam" id="3.40.640.10:FF:000005">
    <property type="entry name" value="Glycine dehydrogenase (decarboxylating), mitochondrial"/>
    <property type="match status" value="1"/>
</dbReference>
<dbReference type="FunFam" id="3.90.1150.10:FF:000007">
    <property type="entry name" value="Glycine dehydrogenase (decarboxylating), mitochondrial"/>
    <property type="match status" value="1"/>
</dbReference>
<dbReference type="FunFam" id="3.40.640.10:FF:000007">
    <property type="entry name" value="glycine dehydrogenase (Decarboxylating), mitochondrial"/>
    <property type="match status" value="1"/>
</dbReference>
<dbReference type="Gene3D" id="3.90.1150.10">
    <property type="entry name" value="Aspartate Aminotransferase, domain 1"/>
    <property type="match status" value="1"/>
</dbReference>
<dbReference type="Gene3D" id="3.40.640.10">
    <property type="entry name" value="Type I PLP-dependent aspartate aminotransferase-like (Major domain)"/>
    <property type="match status" value="2"/>
</dbReference>
<dbReference type="HAMAP" id="MF_00711">
    <property type="entry name" value="GcvP"/>
    <property type="match status" value="1"/>
</dbReference>
<dbReference type="InterPro" id="IPR003437">
    <property type="entry name" value="GcvP"/>
</dbReference>
<dbReference type="InterPro" id="IPR049316">
    <property type="entry name" value="GDC-P_C"/>
</dbReference>
<dbReference type="InterPro" id="IPR049315">
    <property type="entry name" value="GDC-P_N"/>
</dbReference>
<dbReference type="InterPro" id="IPR020581">
    <property type="entry name" value="GDC_P"/>
</dbReference>
<dbReference type="InterPro" id="IPR015424">
    <property type="entry name" value="PyrdxlP-dep_Trfase"/>
</dbReference>
<dbReference type="InterPro" id="IPR015421">
    <property type="entry name" value="PyrdxlP-dep_Trfase_major"/>
</dbReference>
<dbReference type="InterPro" id="IPR015422">
    <property type="entry name" value="PyrdxlP-dep_Trfase_small"/>
</dbReference>
<dbReference type="NCBIfam" id="TIGR00461">
    <property type="entry name" value="gcvP"/>
    <property type="match status" value="1"/>
</dbReference>
<dbReference type="NCBIfam" id="NF003346">
    <property type="entry name" value="PRK04366.1"/>
    <property type="match status" value="1"/>
</dbReference>
<dbReference type="PANTHER" id="PTHR11773:SF13">
    <property type="entry name" value="GLYCINE DEHYDROGENASE (DECARBOXYLATING)"/>
    <property type="match status" value="1"/>
</dbReference>
<dbReference type="PANTHER" id="PTHR11773">
    <property type="entry name" value="GLYCINE DEHYDROGENASE, DECARBOXYLATING"/>
    <property type="match status" value="1"/>
</dbReference>
<dbReference type="Pfam" id="PF21478">
    <property type="entry name" value="GcvP2_C"/>
    <property type="match status" value="1"/>
</dbReference>
<dbReference type="Pfam" id="PF02347">
    <property type="entry name" value="GDC-P"/>
    <property type="match status" value="2"/>
</dbReference>
<dbReference type="SUPFAM" id="SSF53383">
    <property type="entry name" value="PLP-dependent transferases"/>
    <property type="match status" value="2"/>
</dbReference>
<name>GCSP_PHOLL</name>
<reference key="1">
    <citation type="journal article" date="2003" name="Nat. Biotechnol.">
        <title>The genome sequence of the entomopathogenic bacterium Photorhabdus luminescens.</title>
        <authorList>
            <person name="Duchaud E."/>
            <person name="Rusniok C."/>
            <person name="Frangeul L."/>
            <person name="Buchrieser C."/>
            <person name="Givaudan A."/>
            <person name="Taourit S."/>
            <person name="Bocs S."/>
            <person name="Boursaux-Eude C."/>
            <person name="Chandler M."/>
            <person name="Charles J.-F."/>
            <person name="Dassa E."/>
            <person name="Derose R."/>
            <person name="Derzelle S."/>
            <person name="Freyssinet G."/>
            <person name="Gaudriault S."/>
            <person name="Medigue C."/>
            <person name="Lanois A."/>
            <person name="Powell K."/>
            <person name="Siguier P."/>
            <person name="Vincent R."/>
            <person name="Wingate V."/>
            <person name="Zouine M."/>
            <person name="Glaser P."/>
            <person name="Boemare N."/>
            <person name="Danchin A."/>
            <person name="Kunst F."/>
        </authorList>
    </citation>
    <scope>NUCLEOTIDE SEQUENCE [LARGE SCALE GENOMIC DNA]</scope>
    <source>
        <strain>DSM 15139 / CIP 105565 / TT01</strain>
    </source>
</reference>
<accession>Q7N199</accession>
<feature type="chain" id="PRO_0000166922" description="Glycine dehydrogenase (decarboxylating)">
    <location>
        <begin position="1"/>
        <end position="958"/>
    </location>
</feature>
<feature type="modified residue" description="N6-(pyridoxal phosphate)lysine" evidence="1">
    <location>
        <position position="708"/>
    </location>
</feature>